<gene>
    <name evidence="2" type="primary">RPL38</name>
    <name type="ordered locus">orf19.2111.2</name>
    <name type="ORF">CAALFM_C200210WA</name>
</gene>
<organism>
    <name type="scientific">Candida albicans (strain SC5314 / ATCC MYA-2876)</name>
    <name type="common">Yeast</name>
    <dbReference type="NCBI Taxonomy" id="237561"/>
    <lineage>
        <taxon>Eukaryota</taxon>
        <taxon>Fungi</taxon>
        <taxon>Dikarya</taxon>
        <taxon>Ascomycota</taxon>
        <taxon>Saccharomycotina</taxon>
        <taxon>Pichiomycetes</taxon>
        <taxon>Debaryomycetaceae</taxon>
        <taxon>Candida/Lodderomyces clade</taxon>
        <taxon>Candida</taxon>
    </lineage>
</organism>
<keyword id="KW-0002">3D-structure</keyword>
<keyword id="KW-0963">Cytoplasm</keyword>
<keyword id="KW-1185">Reference proteome</keyword>
<keyword id="KW-0687">Ribonucleoprotein</keyword>
<keyword id="KW-0689">Ribosomal protein</keyword>
<sequence length="78" mass="8893">MAREIKDIKEFVELARRSDIKSAIVKVNAKVNANGKKFKQTKFKVRGSRYQYTLVVNDASKAKKLQQSLPPTLKITNL</sequence>
<comment type="function">
    <text evidence="4">Component of the ribosome, a large ribonucleoprotein complex responsible for the synthesis of proteins in the cell. The small ribosomal subunit (SSU) binds messenger RNAs (mRNAs) and translates the encoded message by selecting cognate aminoacyl-transfer RNA (tRNA) molecules. The large subunit (LSU) contains the ribosomal catalytic site termed the peptidyl transferase center (PTC), which catalyzes the formation of peptide bonds, thereby polymerizing the amino acids delivered by tRNAs into a polypeptide chain. The nascent polypeptides leave the ribosome through a tunnel in the LSU and interact with protein factors that function in enzymatic processing, targeting, and the membrane insertion of nascent chains at the exit of the ribosomal tunnel.</text>
</comment>
<comment type="subunit">
    <text evidence="1">Component of the large ribosomal subunit (PubMed:35613268). Mature ribosomes consist of a small (40S) and a large (60S) subunit (PubMed:35613268). The 40S subunit contains about 32 different proteins and 1 molecule of RNA (18S) (PubMed:35613268). The 60S subunit contains 45 different proteins and 3 molecules of RNA (25S, 5.8S and 5S) (PubMed:35613268).</text>
</comment>
<comment type="subcellular location">
    <subcellularLocation>
        <location evidence="4">Cytoplasm</location>
    </subcellularLocation>
</comment>
<comment type="similarity">
    <text evidence="3">Belongs to the eukaryotic ribosomal protein eL38 family.</text>
</comment>
<dbReference type="EMBL" id="CP017624">
    <property type="protein sequence ID" value="AOW27075.1"/>
    <property type="molecule type" value="Genomic_DNA"/>
</dbReference>
<dbReference type="RefSeq" id="XP_019330734.1">
    <property type="nucleotide sequence ID" value="XM_019475189.1"/>
</dbReference>
<dbReference type="PDB" id="7PZY">
    <property type="method" value="EM"/>
    <property type="resolution" value="2.32 A"/>
    <property type="chains" value="AL=1-78"/>
</dbReference>
<dbReference type="PDB" id="7Q08">
    <property type="method" value="EM"/>
    <property type="resolution" value="2.56 A"/>
    <property type="chains" value="AL=1-78"/>
</dbReference>
<dbReference type="PDB" id="7Q0F">
    <property type="method" value="EM"/>
    <property type="resolution" value="2.64 A"/>
    <property type="chains" value="AL=1-78"/>
</dbReference>
<dbReference type="PDB" id="7Q0P">
    <property type="method" value="EM"/>
    <property type="resolution" value="2.77 A"/>
    <property type="chains" value="AL=1-78"/>
</dbReference>
<dbReference type="PDB" id="7Q0R">
    <property type="method" value="EM"/>
    <property type="resolution" value="2.67 A"/>
    <property type="chains" value="AL=1-78"/>
</dbReference>
<dbReference type="PDB" id="8C3A">
    <property type="method" value="X-ray"/>
    <property type="resolution" value="3.00 A"/>
    <property type="chains" value="AL/CF=1-78"/>
</dbReference>
<dbReference type="PDB" id="8CQ7">
    <property type="method" value="X-ray"/>
    <property type="resolution" value="3.20 A"/>
    <property type="chains" value="AL/CF=1-78"/>
</dbReference>
<dbReference type="PDB" id="8CQW">
    <property type="method" value="X-ray"/>
    <property type="resolution" value="3.05 A"/>
    <property type="chains" value="AL/CF=1-78"/>
</dbReference>
<dbReference type="PDB" id="8CRE">
    <property type="method" value="X-ray"/>
    <property type="resolution" value="3.00 A"/>
    <property type="chains" value="AL/CF=1-78"/>
</dbReference>
<dbReference type="PDB" id="8OEQ">
    <property type="method" value="X-ray"/>
    <property type="resolution" value="3.30 A"/>
    <property type="chains" value="AL/CF=1-78"/>
</dbReference>
<dbReference type="PDB" id="8OGJ">
    <property type="method" value="EM"/>
    <property type="resolution" value="3.10 A"/>
    <property type="chains" value="AL=1-78"/>
</dbReference>
<dbReference type="PDB" id="8OH6">
    <property type="method" value="X-ray"/>
    <property type="resolution" value="3.35 A"/>
    <property type="chains" value="AL/CF=1-78"/>
</dbReference>
<dbReference type="PDB" id="8OI5">
    <property type="method" value="X-ray"/>
    <property type="resolution" value="2.90 A"/>
    <property type="chains" value="AL/CF=1-78"/>
</dbReference>
<dbReference type="PDB" id="8OJ3">
    <property type="method" value="X-ray"/>
    <property type="resolution" value="3.50 A"/>
    <property type="chains" value="AL/CF=1-78"/>
</dbReference>
<dbReference type="PDB" id="8Q5I">
    <property type="method" value="EM"/>
    <property type="resolution" value="2.45 A"/>
    <property type="chains" value="AL=1-78"/>
</dbReference>
<dbReference type="PDBsum" id="7PZY"/>
<dbReference type="PDBsum" id="7Q08"/>
<dbReference type="PDBsum" id="7Q0F"/>
<dbReference type="PDBsum" id="7Q0P"/>
<dbReference type="PDBsum" id="7Q0R"/>
<dbReference type="PDBsum" id="8C3A"/>
<dbReference type="PDBsum" id="8CQ7"/>
<dbReference type="PDBsum" id="8CQW"/>
<dbReference type="PDBsum" id="8CRE"/>
<dbReference type="PDBsum" id="8OEQ"/>
<dbReference type="PDBsum" id="8OGJ"/>
<dbReference type="PDBsum" id="8OH6"/>
<dbReference type="PDBsum" id="8OI5"/>
<dbReference type="PDBsum" id="8OJ3"/>
<dbReference type="PDBsum" id="8Q5I"/>
<dbReference type="EMDB" id="EMD-13737"/>
<dbReference type="EMDB" id="EMD-13741"/>
<dbReference type="EMDB" id="EMD-13744"/>
<dbReference type="EMDB" id="EMD-13749"/>
<dbReference type="EMDB" id="EMD-13750"/>
<dbReference type="EMDB" id="EMD-16874"/>
<dbReference type="SMR" id="A0A1D8PG16"/>
<dbReference type="FunCoup" id="A0A1D8PG16">
    <property type="interactions" value="918"/>
</dbReference>
<dbReference type="STRING" id="237561.A0A1D8PG16"/>
<dbReference type="EnsemblFungi" id="C2_00210W_A-T">
    <property type="protein sequence ID" value="C2_00210W_A-T-p1"/>
    <property type="gene ID" value="C2_00210W_A"/>
</dbReference>
<dbReference type="GeneID" id="30515082"/>
<dbReference type="KEGG" id="cal:CAALFM_C200210WA"/>
<dbReference type="CGD" id="CAL0000195876">
    <property type="gene designation" value="RPL38"/>
</dbReference>
<dbReference type="VEuPathDB" id="FungiDB:C2_00210W_A"/>
<dbReference type="eggNOG" id="KOG3499">
    <property type="taxonomic scope" value="Eukaryota"/>
</dbReference>
<dbReference type="InParanoid" id="A0A1D8PG16"/>
<dbReference type="OMA" id="RCHRFIY"/>
<dbReference type="OrthoDB" id="10250488at2759"/>
<dbReference type="Proteomes" id="UP000000559">
    <property type="component" value="Chromosome 2"/>
</dbReference>
<dbReference type="GO" id="GO:0022625">
    <property type="term" value="C:cytosolic large ribosomal subunit"/>
    <property type="evidence" value="ECO:0000318"/>
    <property type="project" value="GO_Central"/>
</dbReference>
<dbReference type="GO" id="GO:0030446">
    <property type="term" value="C:hyphal cell wall"/>
    <property type="evidence" value="ECO:0000314"/>
    <property type="project" value="CGD"/>
</dbReference>
<dbReference type="GO" id="GO:0030445">
    <property type="term" value="C:yeast-form cell wall"/>
    <property type="evidence" value="ECO:0000314"/>
    <property type="project" value="CGD"/>
</dbReference>
<dbReference type="GO" id="GO:0003735">
    <property type="term" value="F:structural constituent of ribosome"/>
    <property type="evidence" value="ECO:0000318"/>
    <property type="project" value="GO_Central"/>
</dbReference>
<dbReference type="GO" id="GO:0022618">
    <property type="term" value="P:protein-RNA complex assembly"/>
    <property type="evidence" value="ECO:0000318"/>
    <property type="project" value="GO_Central"/>
</dbReference>
<dbReference type="GO" id="GO:0006412">
    <property type="term" value="P:translation"/>
    <property type="evidence" value="ECO:0000303"/>
    <property type="project" value="CGD"/>
</dbReference>
<dbReference type="FunFam" id="3.30.720.90:FF:000002">
    <property type="entry name" value="60S ribosomal proteins L38"/>
    <property type="match status" value="1"/>
</dbReference>
<dbReference type="Gene3D" id="3.30.720.90">
    <property type="match status" value="1"/>
</dbReference>
<dbReference type="InterPro" id="IPR002675">
    <property type="entry name" value="Ribosomal_eL38"/>
</dbReference>
<dbReference type="InterPro" id="IPR038464">
    <property type="entry name" value="Ribosomal_eL38_sf"/>
</dbReference>
<dbReference type="PANTHER" id="PTHR10965">
    <property type="entry name" value="60S RIBOSOMAL PROTEIN L38"/>
    <property type="match status" value="1"/>
</dbReference>
<dbReference type="PANTHER" id="PTHR10965:SF0">
    <property type="entry name" value="LARGE RIBOSOMAL SUBUNIT PROTEIN EL38"/>
    <property type="match status" value="1"/>
</dbReference>
<dbReference type="Pfam" id="PF01781">
    <property type="entry name" value="Ribosomal_L38e"/>
    <property type="match status" value="1"/>
</dbReference>
<proteinExistence type="evidence at protein level"/>
<accession>A0A1D8PG16</accession>
<evidence type="ECO:0000269" key="1">
    <source>
    </source>
</evidence>
<evidence type="ECO:0000303" key="2">
    <source>
    </source>
</evidence>
<evidence type="ECO:0000305" key="3"/>
<evidence type="ECO:0000305" key="4">
    <source>
    </source>
</evidence>
<evidence type="ECO:0007744" key="5">
    <source>
        <dbReference type="PDB" id="7PZY"/>
    </source>
</evidence>
<evidence type="ECO:0007744" key="6">
    <source>
        <dbReference type="PDB" id="7Q0F"/>
    </source>
</evidence>
<evidence type="ECO:0007744" key="7">
    <source>
        <dbReference type="PDB" id="7Q0P"/>
    </source>
</evidence>
<reference key="1">
    <citation type="journal article" date="2004" name="Proc. Natl. Acad. Sci. U.S.A.">
        <title>The diploid genome sequence of Candida albicans.</title>
        <authorList>
            <person name="Jones T."/>
            <person name="Federspiel N.A."/>
            <person name="Chibana H."/>
            <person name="Dungan J."/>
            <person name="Kalman S."/>
            <person name="Magee B.B."/>
            <person name="Newport G."/>
            <person name="Thorstenson Y.R."/>
            <person name="Agabian N."/>
            <person name="Magee P.T."/>
            <person name="Davis R.W."/>
            <person name="Scherer S."/>
        </authorList>
    </citation>
    <scope>NUCLEOTIDE SEQUENCE [LARGE SCALE GENOMIC DNA]</scope>
    <source>
        <strain>SC5314 / ATCC MYA-2876</strain>
    </source>
</reference>
<reference key="2">
    <citation type="journal article" date="2007" name="Genome Biol.">
        <title>Assembly of the Candida albicans genome into sixteen supercontigs aligned on the eight chromosomes.</title>
        <authorList>
            <person name="van het Hoog M."/>
            <person name="Rast T.J."/>
            <person name="Martchenko M."/>
            <person name="Grindle S."/>
            <person name="Dignard D."/>
            <person name="Hogues H."/>
            <person name="Cuomo C."/>
            <person name="Berriman M."/>
            <person name="Scherer S."/>
            <person name="Magee B.B."/>
            <person name="Whiteway M."/>
            <person name="Chibana H."/>
            <person name="Nantel A."/>
            <person name="Magee P.T."/>
        </authorList>
    </citation>
    <scope>GENOME REANNOTATION</scope>
    <source>
        <strain>SC5314 / ATCC MYA-2876</strain>
    </source>
</reference>
<reference key="3">
    <citation type="journal article" date="2013" name="Genome Biol.">
        <title>Assembly of a phased diploid Candida albicans genome facilitates allele-specific measurements and provides a simple model for repeat and indel structure.</title>
        <authorList>
            <person name="Muzzey D."/>
            <person name="Schwartz K."/>
            <person name="Weissman J.S."/>
            <person name="Sherlock G."/>
        </authorList>
    </citation>
    <scope>NUCLEOTIDE SEQUENCE [LARGE SCALE GENOMIC DNA]</scope>
    <scope>GENOME REANNOTATION</scope>
    <source>
        <strain>SC5314 / ATCC MYA-2876</strain>
    </source>
</reference>
<reference evidence="5 6 7" key="4">
    <citation type="journal article" date="2022" name="Sci. Adv.">
        <title>E-site drug specificity of the human pathogen Candida albicans ribosome.</title>
        <authorList>
            <person name="Zgadzay Y."/>
            <person name="Kolosova O."/>
            <person name="Stetsenko A."/>
            <person name="Wu C."/>
            <person name="Bruchlen D."/>
            <person name="Usachev K."/>
            <person name="Validov S."/>
            <person name="Jenner L."/>
            <person name="Rogachev A."/>
            <person name="Yusupova G."/>
            <person name="Sachs M.S."/>
            <person name="Guskov A."/>
            <person name="Yusupov M."/>
        </authorList>
    </citation>
    <scope>STRUCTURE BY ELECTRON MICROSCOPY (2.32 ANGSTROMS) OF THE 80S RIBOSOME</scope>
    <scope>SUBUNIT</scope>
</reference>
<protein>
    <recommendedName>
        <fullName evidence="2">Large ribosomal subunit protein eL38</fullName>
    </recommendedName>
    <alternativeName>
        <fullName>60S ribosomal protein L38</fullName>
    </alternativeName>
</protein>
<name>RL38_CANAL</name>
<feature type="chain" id="PRO_0000456502" description="Large ribosomal subunit protein eL38">
    <location>
        <begin position="1"/>
        <end position="78"/>
    </location>
</feature>